<dbReference type="EMBL" id="AF152322">
    <property type="protein sequence ID" value="AAD43716.1"/>
    <property type="molecule type" value="mRNA"/>
</dbReference>
<dbReference type="EMBL" id="AF152508">
    <property type="protein sequence ID" value="AAD43769.1"/>
    <property type="molecule type" value="mRNA"/>
</dbReference>
<dbReference type="EMBL" id="CH471062">
    <property type="protein sequence ID" value="EAW61941.1"/>
    <property type="molecule type" value="Genomic_DNA"/>
</dbReference>
<dbReference type="EMBL" id="BC093871">
    <property type="protein sequence ID" value="AAH93871.1"/>
    <property type="molecule type" value="mRNA"/>
</dbReference>
<dbReference type="EMBL" id="BC104950">
    <property type="protein sequence ID" value="AAI04951.1"/>
    <property type="molecule type" value="mRNA"/>
</dbReference>
<dbReference type="CCDS" id="CCDS47289.1">
    <molecule id="Q9Y5H1-1"/>
</dbReference>
<dbReference type="RefSeq" id="NP_061738.1">
    <molecule id="Q9Y5H1-1"/>
    <property type="nucleotide sequence ID" value="NM_018915.4"/>
</dbReference>
<dbReference type="RefSeq" id="NP_114398.1">
    <molecule id="Q9Y5H1-2"/>
    <property type="nucleotide sequence ID" value="NM_032009.3"/>
</dbReference>
<dbReference type="SMR" id="Q9Y5H1"/>
<dbReference type="BioGRID" id="121053">
    <property type="interactions" value="3"/>
</dbReference>
<dbReference type="STRING" id="9606.ENSP00000378077"/>
<dbReference type="GlyCosmos" id="Q9Y5H1">
    <property type="glycosylation" value="3 sites, No reported glycans"/>
</dbReference>
<dbReference type="GlyGen" id="Q9Y5H1">
    <property type="glycosylation" value="3 sites"/>
</dbReference>
<dbReference type="iPTMnet" id="Q9Y5H1"/>
<dbReference type="PhosphoSitePlus" id="Q9Y5H1"/>
<dbReference type="BioMuta" id="PCDHGA2"/>
<dbReference type="DMDM" id="37999841"/>
<dbReference type="jPOST" id="Q9Y5H1"/>
<dbReference type="MassIVE" id="Q9Y5H1"/>
<dbReference type="PaxDb" id="9606-ENSP00000378077"/>
<dbReference type="PeptideAtlas" id="Q9Y5H1"/>
<dbReference type="ProteomicsDB" id="86383">
    <molecule id="Q9Y5H1-1"/>
</dbReference>
<dbReference type="ProteomicsDB" id="86384">
    <molecule id="Q9Y5H1-2"/>
</dbReference>
<dbReference type="Antibodypedia" id="2261">
    <property type="antibodies" value="75 antibodies from 15 providers"/>
</dbReference>
<dbReference type="DNASU" id="56113"/>
<dbReference type="Ensembl" id="ENST00000394576.3">
    <molecule id="Q9Y5H1-1"/>
    <property type="protein sequence ID" value="ENSP00000378077.2"/>
    <property type="gene ID" value="ENSG00000081853.15"/>
</dbReference>
<dbReference type="Ensembl" id="ENST00000528330.2">
    <molecule id="Q9Y5H1-2"/>
    <property type="protein sequence ID" value="ENSP00000483020.1"/>
    <property type="gene ID" value="ENSG00000081853.15"/>
</dbReference>
<dbReference type="GeneID" id="56113"/>
<dbReference type="KEGG" id="hsa:56113"/>
<dbReference type="MANE-Select" id="ENST00000394576.3">
    <property type="protein sequence ID" value="ENSP00000378077.2"/>
    <property type="RefSeq nucleotide sequence ID" value="NM_018915.4"/>
    <property type="RefSeq protein sequence ID" value="NP_061738.1"/>
</dbReference>
<dbReference type="UCSC" id="uc003ljk.4">
    <molecule id="Q9Y5H1-1"/>
    <property type="organism name" value="human"/>
</dbReference>
<dbReference type="AGR" id="HGNC:8700"/>
<dbReference type="CTD" id="56113"/>
<dbReference type="DisGeNET" id="56113"/>
<dbReference type="GeneCards" id="PCDHGA2"/>
<dbReference type="HGNC" id="HGNC:8700">
    <property type="gene designation" value="PCDHGA2"/>
</dbReference>
<dbReference type="HPA" id="ENSG00000081853">
    <property type="expression patterns" value="Low tissue specificity"/>
</dbReference>
<dbReference type="MalaCards" id="PCDHGA2"/>
<dbReference type="MIM" id="604968">
    <property type="type" value="gene"/>
</dbReference>
<dbReference type="MIM" id="606289">
    <property type="type" value="gene"/>
</dbReference>
<dbReference type="neXtProt" id="NX_Q9Y5H1"/>
<dbReference type="PharmGKB" id="PA33048"/>
<dbReference type="VEuPathDB" id="HostDB:ENSG00000081853"/>
<dbReference type="eggNOG" id="KOG3594">
    <property type="taxonomic scope" value="Eukaryota"/>
</dbReference>
<dbReference type="GeneTree" id="ENSGT00940000159725"/>
<dbReference type="HOGENOM" id="CLU_006480_3_0_1"/>
<dbReference type="InParanoid" id="Q9Y5H1"/>
<dbReference type="OMA" id="LWLTAWD"/>
<dbReference type="OrthoDB" id="6252479at2759"/>
<dbReference type="PAN-GO" id="Q9Y5H1">
    <property type="GO annotations" value="2 GO annotations based on evolutionary models"/>
</dbReference>
<dbReference type="PhylomeDB" id="Q9Y5H1"/>
<dbReference type="TreeFam" id="TF332299"/>
<dbReference type="PathwayCommons" id="Q9Y5H1"/>
<dbReference type="SIGNOR" id="Q9Y5H1"/>
<dbReference type="BioGRID-ORCS" id="56113">
    <property type="hits" value="7 hits in 1085 CRISPR screens"/>
</dbReference>
<dbReference type="ChiTaRS" id="PCDHGA2">
    <property type="organism name" value="human"/>
</dbReference>
<dbReference type="GenomeRNAi" id="56113"/>
<dbReference type="Pharos" id="Q9Y5H1">
    <property type="development level" value="Tdark"/>
</dbReference>
<dbReference type="PRO" id="PR:Q9Y5H1"/>
<dbReference type="Proteomes" id="UP000005640">
    <property type="component" value="Chromosome 5"/>
</dbReference>
<dbReference type="RNAct" id="Q9Y5H1">
    <property type="molecule type" value="protein"/>
</dbReference>
<dbReference type="Bgee" id="ENSG00000081853">
    <property type="expression patterns" value="Expressed in cortical plate and 101 other cell types or tissues"/>
</dbReference>
<dbReference type="GO" id="GO:0005886">
    <property type="term" value="C:plasma membrane"/>
    <property type="evidence" value="ECO:0000318"/>
    <property type="project" value="GO_Central"/>
</dbReference>
<dbReference type="GO" id="GO:0005509">
    <property type="term" value="F:calcium ion binding"/>
    <property type="evidence" value="ECO:0007669"/>
    <property type="project" value="InterPro"/>
</dbReference>
<dbReference type="GO" id="GO:0007155">
    <property type="term" value="P:cell adhesion"/>
    <property type="evidence" value="ECO:0000318"/>
    <property type="project" value="GO_Central"/>
</dbReference>
<dbReference type="GO" id="GO:0007156">
    <property type="term" value="P:homophilic cell adhesion via plasma membrane adhesion molecules"/>
    <property type="evidence" value="ECO:0007669"/>
    <property type="project" value="InterPro"/>
</dbReference>
<dbReference type="GO" id="GO:0007399">
    <property type="term" value="P:nervous system development"/>
    <property type="evidence" value="ECO:0007669"/>
    <property type="project" value="UniProtKB-ARBA"/>
</dbReference>
<dbReference type="CDD" id="cd11304">
    <property type="entry name" value="Cadherin_repeat"/>
    <property type="match status" value="6"/>
</dbReference>
<dbReference type="FunFam" id="2.60.40.60:FF:000004">
    <property type="entry name" value="Protocadherin 1 gamma 2"/>
    <property type="match status" value="1"/>
</dbReference>
<dbReference type="FunFam" id="2.60.40.60:FF:000001">
    <property type="entry name" value="Protocadherin alpha 2"/>
    <property type="match status" value="1"/>
</dbReference>
<dbReference type="FunFam" id="2.60.40.60:FF:000002">
    <property type="entry name" value="Protocadherin alpha 2"/>
    <property type="match status" value="1"/>
</dbReference>
<dbReference type="FunFam" id="2.60.40.60:FF:000006">
    <property type="entry name" value="Protocadherin alpha 2"/>
    <property type="match status" value="1"/>
</dbReference>
<dbReference type="FunFam" id="2.60.40.60:FF:000129">
    <property type="entry name" value="protocadherin alpha-C2 isoform X1"/>
    <property type="match status" value="1"/>
</dbReference>
<dbReference type="FunFam" id="2.60.40.60:FF:000018">
    <property type="entry name" value="Protocadherin gamma c3"/>
    <property type="match status" value="1"/>
</dbReference>
<dbReference type="Gene3D" id="2.60.40.60">
    <property type="entry name" value="Cadherins"/>
    <property type="match status" value="6"/>
</dbReference>
<dbReference type="InterPro" id="IPR002126">
    <property type="entry name" value="Cadherin-like_dom"/>
</dbReference>
<dbReference type="InterPro" id="IPR015919">
    <property type="entry name" value="Cadherin-like_sf"/>
</dbReference>
<dbReference type="InterPro" id="IPR032455">
    <property type="entry name" value="Cadherin_C"/>
</dbReference>
<dbReference type="InterPro" id="IPR031904">
    <property type="entry name" value="Cadherin_CBD"/>
</dbReference>
<dbReference type="InterPro" id="IPR020894">
    <property type="entry name" value="Cadherin_CS"/>
</dbReference>
<dbReference type="InterPro" id="IPR013164">
    <property type="entry name" value="Cadherin_N"/>
</dbReference>
<dbReference type="InterPro" id="IPR050174">
    <property type="entry name" value="Protocadherin/Cadherin-CA"/>
</dbReference>
<dbReference type="PANTHER" id="PTHR24028">
    <property type="entry name" value="CADHERIN-87A"/>
    <property type="match status" value="1"/>
</dbReference>
<dbReference type="PANTHER" id="PTHR24028:SF134">
    <property type="entry name" value="PROTOCADHERIN GAMMA-A2"/>
    <property type="match status" value="1"/>
</dbReference>
<dbReference type="Pfam" id="PF00028">
    <property type="entry name" value="Cadherin"/>
    <property type="match status" value="5"/>
</dbReference>
<dbReference type="Pfam" id="PF08266">
    <property type="entry name" value="Cadherin_2"/>
    <property type="match status" value="1"/>
</dbReference>
<dbReference type="Pfam" id="PF16492">
    <property type="entry name" value="Cadherin_C_2"/>
    <property type="match status" value="1"/>
</dbReference>
<dbReference type="Pfam" id="PF15974">
    <property type="entry name" value="Cadherin_tail"/>
    <property type="match status" value="1"/>
</dbReference>
<dbReference type="PRINTS" id="PR00205">
    <property type="entry name" value="CADHERIN"/>
</dbReference>
<dbReference type="SMART" id="SM00112">
    <property type="entry name" value="CA"/>
    <property type="match status" value="6"/>
</dbReference>
<dbReference type="SUPFAM" id="SSF49313">
    <property type="entry name" value="Cadherin-like"/>
    <property type="match status" value="6"/>
</dbReference>
<dbReference type="PROSITE" id="PS00232">
    <property type="entry name" value="CADHERIN_1"/>
    <property type="match status" value="5"/>
</dbReference>
<dbReference type="PROSITE" id="PS50268">
    <property type="entry name" value="CADHERIN_2"/>
    <property type="match status" value="6"/>
</dbReference>
<evidence type="ECO:0000250" key="1"/>
<evidence type="ECO:0000255" key="2"/>
<evidence type="ECO:0000255" key="3">
    <source>
        <dbReference type="PROSITE-ProRule" id="PRU00043"/>
    </source>
</evidence>
<evidence type="ECO:0000256" key="4">
    <source>
        <dbReference type="SAM" id="MobiDB-lite"/>
    </source>
</evidence>
<evidence type="ECO:0000303" key="5">
    <source>
    </source>
</evidence>
<evidence type="ECO:0000303" key="6">
    <source>
    </source>
</evidence>
<accession>Q9Y5H1</accession>
<accession>Q52LL6</accession>
<accession>Q9Y5D5</accession>
<gene>
    <name type="primary">PCDHGA2</name>
</gene>
<organism>
    <name type="scientific">Homo sapiens</name>
    <name type="common">Human</name>
    <dbReference type="NCBI Taxonomy" id="9606"/>
    <lineage>
        <taxon>Eukaryota</taxon>
        <taxon>Metazoa</taxon>
        <taxon>Chordata</taxon>
        <taxon>Craniata</taxon>
        <taxon>Vertebrata</taxon>
        <taxon>Euteleostomi</taxon>
        <taxon>Mammalia</taxon>
        <taxon>Eutheria</taxon>
        <taxon>Euarchontoglires</taxon>
        <taxon>Primates</taxon>
        <taxon>Haplorrhini</taxon>
        <taxon>Catarrhini</taxon>
        <taxon>Hominidae</taxon>
        <taxon>Homo</taxon>
    </lineage>
</organism>
<feature type="signal peptide" evidence="2">
    <location>
        <begin position="1"/>
        <end position="28"/>
    </location>
</feature>
<feature type="chain" id="PRO_0000003950" description="Protocadherin gamma-A2">
    <location>
        <begin position="29"/>
        <end position="932"/>
    </location>
</feature>
<feature type="topological domain" description="Extracellular" evidence="2">
    <location>
        <begin position="29"/>
        <end position="692"/>
    </location>
</feature>
<feature type="transmembrane region" description="Helical" evidence="2">
    <location>
        <begin position="693"/>
        <end position="713"/>
    </location>
</feature>
<feature type="topological domain" description="Cytoplasmic" evidence="2">
    <location>
        <begin position="714"/>
        <end position="932"/>
    </location>
</feature>
<feature type="domain" description="Cadherin 1" evidence="3">
    <location>
        <begin position="29"/>
        <end position="133"/>
    </location>
</feature>
<feature type="domain" description="Cadherin 2" evidence="3">
    <location>
        <begin position="134"/>
        <end position="242"/>
    </location>
</feature>
<feature type="domain" description="Cadherin 3" evidence="3">
    <location>
        <begin position="243"/>
        <end position="347"/>
    </location>
</feature>
<feature type="domain" description="Cadherin 4" evidence="3">
    <location>
        <begin position="348"/>
        <end position="452"/>
    </location>
</feature>
<feature type="domain" description="Cadherin 5" evidence="3">
    <location>
        <begin position="453"/>
        <end position="562"/>
    </location>
</feature>
<feature type="domain" description="Cadherin 6" evidence="3">
    <location>
        <begin position="570"/>
        <end position="682"/>
    </location>
</feature>
<feature type="region of interest" description="Disordered" evidence="4">
    <location>
        <begin position="798"/>
        <end position="841"/>
    </location>
</feature>
<feature type="region of interest" description="Disordered" evidence="4">
    <location>
        <begin position="902"/>
        <end position="932"/>
    </location>
</feature>
<feature type="compositionally biased region" description="Polar residues" evidence="4">
    <location>
        <begin position="806"/>
        <end position="841"/>
    </location>
</feature>
<feature type="compositionally biased region" description="Basic residues" evidence="4">
    <location>
        <begin position="922"/>
        <end position="932"/>
    </location>
</feature>
<feature type="glycosylation site" description="N-linked (GlcNAc...) asparagine" evidence="2">
    <location>
        <position position="419"/>
    </location>
</feature>
<feature type="glycosylation site" description="N-linked (GlcNAc...) asparagine" evidence="2">
    <location>
        <position position="545"/>
    </location>
</feature>
<feature type="glycosylation site" description="N-linked (GlcNAc...) asparagine" evidence="2">
    <location>
        <position position="685"/>
    </location>
</feature>
<feature type="splice variant" id="VSP_008661" description="In isoform 2." evidence="5 6">
    <original>QAPPNTDWRFSQAQR</original>
    <variation>VIYLFTTYVLASLLK</variation>
    <location>
        <begin position="809"/>
        <end position="823"/>
    </location>
</feature>
<feature type="splice variant" id="VSP_008662" description="In isoform 2." evidence="5 6">
    <location>
        <begin position="824"/>
        <end position="932"/>
    </location>
</feature>
<feature type="sequence variant" id="VAR_048556" description="In dbSNP:rs6878145.">
    <original>Q</original>
    <variation>R</variation>
    <location>
        <position position="5"/>
    </location>
</feature>
<protein>
    <recommendedName>
        <fullName>Protocadherin gamma-A2</fullName>
        <shortName>PCDH-gamma-A2</shortName>
    </recommendedName>
</protein>
<name>PCDG2_HUMAN</name>
<comment type="function">
    <text>Potential calcium-dependent cell-adhesion protein. May be involved in the establishment and maintenance of specific neuronal connections in the brain.</text>
</comment>
<comment type="subcellular location">
    <subcellularLocation>
        <location evidence="1">Cell membrane</location>
        <topology evidence="1">Single-pass type I membrane protein</topology>
    </subcellularLocation>
</comment>
<comment type="alternative products">
    <event type="alternative splicing"/>
    <isoform>
        <id>Q9Y5H1-1</id>
        <name>1</name>
        <sequence type="displayed"/>
    </isoform>
    <isoform>
        <id>Q9Y5H1-2</id>
        <name>2</name>
        <name>Short</name>
        <sequence type="described" ref="VSP_008661 VSP_008662"/>
    </isoform>
</comment>
<reference key="1">
    <citation type="journal article" date="1999" name="Cell">
        <title>A striking organization of a large family of human neural cadherin-like cell adhesion genes.</title>
        <authorList>
            <person name="Wu Q."/>
            <person name="Maniatis T."/>
        </authorList>
    </citation>
    <scope>NUCLEOTIDE SEQUENCE [MRNA] (ISOFORMS 1 AND 2)</scope>
    <source>
        <tissue>Brain</tissue>
    </source>
</reference>
<reference key="2">
    <citation type="submission" date="2005-09" db="EMBL/GenBank/DDBJ databases">
        <authorList>
            <person name="Mural R.J."/>
            <person name="Istrail S."/>
            <person name="Sutton G.G."/>
            <person name="Florea L."/>
            <person name="Halpern A.L."/>
            <person name="Mobarry C.M."/>
            <person name="Lippert R."/>
            <person name="Walenz B."/>
            <person name="Shatkay H."/>
            <person name="Dew I."/>
            <person name="Miller J.R."/>
            <person name="Flanigan M.J."/>
            <person name="Edwards N.J."/>
            <person name="Bolanos R."/>
            <person name="Fasulo D."/>
            <person name="Halldorsson B.V."/>
            <person name="Hannenhalli S."/>
            <person name="Turner R."/>
            <person name="Yooseph S."/>
            <person name="Lu F."/>
            <person name="Nusskern D.R."/>
            <person name="Shue B.C."/>
            <person name="Zheng X.H."/>
            <person name="Zhong F."/>
            <person name="Delcher A.L."/>
            <person name="Huson D.H."/>
            <person name="Kravitz S.A."/>
            <person name="Mouchard L."/>
            <person name="Reinert K."/>
            <person name="Remington K.A."/>
            <person name="Clark A.G."/>
            <person name="Waterman M.S."/>
            <person name="Eichler E.E."/>
            <person name="Adams M.D."/>
            <person name="Hunkapiller M.W."/>
            <person name="Myers E.W."/>
            <person name="Venter J.C."/>
        </authorList>
    </citation>
    <scope>NUCLEOTIDE SEQUENCE [LARGE SCALE GENOMIC DNA]</scope>
</reference>
<reference key="3">
    <citation type="journal article" date="2004" name="Genome Res.">
        <title>The status, quality, and expansion of the NIH full-length cDNA project: the Mammalian Gene Collection (MGC).</title>
        <authorList>
            <consortium name="The MGC Project Team"/>
        </authorList>
    </citation>
    <scope>NUCLEOTIDE SEQUENCE [LARGE SCALE MRNA] (ISOFORM 2)</scope>
    <source>
        <tissue>Brain</tissue>
    </source>
</reference>
<sequence length="932" mass="101484">MAALQKLPHCRKLVLLCFLLATLWEARAGQIRYSVREEIDRGSFVGNIAKDLGLEPLALAEQGVRIVSRGRSQLFALNPRSGSLVTANRIDREELCAQSAPCLLNFNILLEDKLTIYSVEVEITDINDNAPRFGVEELELKISETTTPGFRIPLKNAHDADVGENALQKYALNPNDHFSLDVRRGADGNKYPELVLERSLDREEEAVHHLVLVASDGGDPVLSGTSRICVKVLDANDNAPVFTQPEYRISIPENTLVGTRILTVTATDADEGYYAQVVYFLEKSPGETSEVFELKSTSGELTIIKDLDYEDATFHEIDIEAQDGPGLLTRAKVIVTVLDVNDNAPEFYMTSATSSVSEDSLPGTIIGLFNVHDRDSGQNAFTTCSLPEDLPFKLEKSVDNYYRLVTTRALDREQFSFYNITLTAKDGGNPSLSTDAHILLQVADINDNAPAFSRTSYSTYIPENNPRGASVFSVTAHDPDSNDNAHVTYSFAEDTVQGAPLSSYISINSDTGVLYALRSFDYEQLRDLQVWVIARDSGNPPLSSNVSLSLFVLDQNDNAPEILYPAFPTDGSTGVELAPRSAEPGYLVTKVVAVDRDSGQNAWLSYHLLKASEPGLFSVGLHTGEVRTARALLDRDALKQSLVVAIQDHGQPPLSATVTLTVAVADRIPDILADLGSLEPSAIPNDSDLTLYLVVAVAAVSCVFLAFVIVLLAHRLRRWHKSRLLQASGGSLTGMQSSHFVGVDGVRAFLQTYSHEVSLTADSRKSHLIFPQPNYADTLISQESCEKKDFLSAPQSLLEEEREETFSQQAPPNTDWRFSQAQRPGTSGSQNGDDTGTWPNNQFDTEMLQAMILASASEAADGSSTLGGGAGTMGLSARYGPQFTLQHVPDYRQNVYIPGSNATLTNAAGKRDGKAPAGGNGNKKKSGKKEKK</sequence>
<keyword id="KW-0025">Alternative splicing</keyword>
<keyword id="KW-0106">Calcium</keyword>
<keyword id="KW-0130">Cell adhesion</keyword>
<keyword id="KW-1003">Cell membrane</keyword>
<keyword id="KW-0325">Glycoprotein</keyword>
<keyword id="KW-0472">Membrane</keyword>
<keyword id="KW-1267">Proteomics identification</keyword>
<keyword id="KW-1185">Reference proteome</keyword>
<keyword id="KW-0677">Repeat</keyword>
<keyword id="KW-0732">Signal</keyword>
<keyword id="KW-0812">Transmembrane</keyword>
<keyword id="KW-1133">Transmembrane helix</keyword>
<proteinExistence type="evidence at protein level"/>